<keyword id="KW-0342">GTP-binding</keyword>
<keyword id="KW-0378">Hydrolase</keyword>
<keyword id="KW-0479">Metal-binding</keyword>
<keyword id="KW-0496">Mitochondrion</keyword>
<keyword id="KW-0547">Nucleotide-binding</keyword>
<keyword id="KW-1185">Reference proteome</keyword>
<keyword id="KW-0690">Ribosome biogenesis</keyword>
<keyword id="KW-0694">RNA-binding</keyword>
<keyword id="KW-0699">rRNA-binding</keyword>
<keyword id="KW-0809">Transit peptide</keyword>
<keyword id="KW-0862">Zinc</keyword>
<feature type="transit peptide" description="Mitochondrion" evidence="1">
    <location>
        <begin position="1"/>
        <end status="unknown"/>
    </location>
</feature>
<feature type="chain" id="PRO_0000439700" description="Small ribosomal subunit biogenesis GTPase RsgA 1, mitochondrial">
    <location>
        <begin status="unknown"/>
        <end position="433"/>
    </location>
</feature>
<feature type="domain" description="CP-type G" evidence="3">
    <location>
        <begin position="113"/>
        <end position="291"/>
    </location>
</feature>
<feature type="region of interest" description="Disordered" evidence="4">
    <location>
        <begin position="1"/>
        <end position="20"/>
    </location>
</feature>
<feature type="binding site" evidence="2">
    <location>
        <begin position="212"/>
        <end position="220"/>
    </location>
    <ligand>
        <name>GTP</name>
        <dbReference type="ChEBI" id="CHEBI:37565"/>
    </ligand>
</feature>
<feature type="binding site" evidence="2">
    <location>
        <position position="317"/>
    </location>
    <ligand>
        <name>Zn(2+)</name>
        <dbReference type="ChEBI" id="CHEBI:29105"/>
    </ligand>
</feature>
<feature type="binding site" evidence="2">
    <location>
        <position position="322"/>
    </location>
    <ligand>
        <name>Zn(2+)</name>
        <dbReference type="ChEBI" id="CHEBI:29105"/>
    </ligand>
</feature>
<feature type="binding site" evidence="2">
    <location>
        <position position="324"/>
    </location>
    <ligand>
        <name>Zn(2+)</name>
        <dbReference type="ChEBI" id="CHEBI:29105"/>
    </ligand>
</feature>
<feature type="binding site" evidence="2">
    <location>
        <position position="330"/>
    </location>
    <ligand>
        <name>Zn(2+)</name>
        <dbReference type="ChEBI" id="CHEBI:29105"/>
    </ligand>
</feature>
<comment type="function">
    <text evidence="2 5">One of several proteins that assist in the late maturation steps of the functional core of the 30S ribosomal subunit. Helps release RbfA from mature subunits. May play a role in the assembly of ribosomal proteins into the subunit. Circularly permuted GTPase that catalyzes slow GTP hydrolysis, GTPase activity is stimulated by the 30S ribosomal subunit (By similarity). Required for embryo development (PubMed:15266054).</text>
</comment>
<comment type="cofactor">
    <cofactor evidence="2">
        <name>Zn(2+)</name>
        <dbReference type="ChEBI" id="CHEBI:29105"/>
    </cofactor>
    <text evidence="2">Binds 1 zinc ion per subunit.</text>
</comment>
<comment type="subunit">
    <text evidence="2">Monomer. Associates with 30S ribosomal subunit, binds 16S rRNA.</text>
</comment>
<comment type="subcellular location">
    <subcellularLocation>
        <location evidence="1">Mitochondrion</location>
    </subcellularLocation>
</comment>
<comment type="disruption phenotype">
    <text evidence="5">Embryo defective.</text>
</comment>
<comment type="similarity">
    <text evidence="2">Belongs to the TRAFAC class YlqF/YawG GTPase family. RsgA subfamily.</text>
</comment>
<comment type="sequence caution" evidence="7">
    <conflict type="erroneous gene model prediction">
        <sequence resource="EMBL-CDS" id="AAC18791"/>
    </conflict>
</comment>
<accession>Q4V399</accession>
<accession>O64802</accession>
<sequence>MLRAKHIGKNYSSSLSPVLSPEHKPSLLESQAIGTVATAQANFMRVIVQDVANSVTSDDDNDSSKTGVELLCVVRAVLKKIRRRVLVGDKVLVGSIDWVDRRGMIENVFHRRSEILDPPVANVDHLLVLFSLDQPKLEPFTLTRFLVEAESTRIPLTLALNKTELISEEELETWKIRLRGWNYEPLFCSVGTKDGLDDIAFVLRDQTSVIVGPSGVGKSSLINVLRSNHGGGVVEDENWFEPMLGNKWFDDQRVGEVSSRSGRGKHTTRNVSLLPVSEGGYLADTPGFNQPSLLKVTKHSLAHCFPEIRNMIESEKCGFRDCLHIGEPGCVVKGDWERYPYYLQLLDEIRIREEFQLRTFGTKREDDVRYKVGDMGVKHAEPRLMPKKHRRESRKKTKQTMISELDEFEDEDSDLYIENDPIVQAIENENKRQ</sequence>
<dbReference type="EC" id="3.6.1.-" evidence="2"/>
<dbReference type="EMBL" id="AC004393">
    <property type="protein sequence ID" value="AAC18791.1"/>
    <property type="status" value="ALT_SEQ"/>
    <property type="molecule type" value="Genomic_DNA"/>
</dbReference>
<dbReference type="EMBL" id="CP002684">
    <property type="protein sequence ID" value="AEE34646.1"/>
    <property type="molecule type" value="Genomic_DNA"/>
</dbReference>
<dbReference type="EMBL" id="BT023457">
    <property type="protein sequence ID" value="AAY56448.1"/>
    <property type="molecule type" value="mRNA"/>
</dbReference>
<dbReference type="PIR" id="T02162">
    <property type="entry name" value="T02162"/>
</dbReference>
<dbReference type="RefSeq" id="NP_176911.2">
    <property type="nucleotide sequence ID" value="NM_105411.3"/>
</dbReference>
<dbReference type="SMR" id="Q4V399"/>
<dbReference type="FunCoup" id="Q4V399">
    <property type="interactions" value="334"/>
</dbReference>
<dbReference type="STRING" id="3702.Q4V399"/>
<dbReference type="iPTMnet" id="Q4V399"/>
<dbReference type="PaxDb" id="3702-AT1G67440.1"/>
<dbReference type="EnsemblPlants" id="AT1G67440.1">
    <property type="protein sequence ID" value="AT1G67440.1"/>
    <property type="gene ID" value="AT1G67440"/>
</dbReference>
<dbReference type="GeneID" id="843064"/>
<dbReference type="Gramene" id="AT1G67440.1">
    <property type="protein sequence ID" value="AT1G67440.1"/>
    <property type="gene ID" value="AT1G67440"/>
</dbReference>
<dbReference type="KEGG" id="ath:AT1G67440"/>
<dbReference type="Araport" id="AT1G67440"/>
<dbReference type="TAIR" id="AT1G67440">
    <property type="gene designation" value="EMB1688"/>
</dbReference>
<dbReference type="eggNOG" id="ENOG502QRR1">
    <property type="taxonomic scope" value="Eukaryota"/>
</dbReference>
<dbReference type="HOGENOM" id="CLU_033617_4_0_1"/>
<dbReference type="InParanoid" id="Q4V399"/>
<dbReference type="OrthoDB" id="442158at2759"/>
<dbReference type="PhylomeDB" id="Q4V399"/>
<dbReference type="PRO" id="PR:Q4V399"/>
<dbReference type="Proteomes" id="UP000006548">
    <property type="component" value="Chromosome 1"/>
</dbReference>
<dbReference type="ExpressionAtlas" id="Q4V399">
    <property type="expression patterns" value="baseline and differential"/>
</dbReference>
<dbReference type="GO" id="GO:0005739">
    <property type="term" value="C:mitochondrion"/>
    <property type="evidence" value="ECO:0007669"/>
    <property type="project" value="UniProtKB-SubCell"/>
</dbReference>
<dbReference type="GO" id="GO:0005525">
    <property type="term" value="F:GTP binding"/>
    <property type="evidence" value="ECO:0007669"/>
    <property type="project" value="UniProtKB-KW"/>
</dbReference>
<dbReference type="GO" id="GO:0003924">
    <property type="term" value="F:GTPase activity"/>
    <property type="evidence" value="ECO:0007669"/>
    <property type="project" value="InterPro"/>
</dbReference>
<dbReference type="GO" id="GO:0046872">
    <property type="term" value="F:metal ion binding"/>
    <property type="evidence" value="ECO:0007669"/>
    <property type="project" value="UniProtKB-KW"/>
</dbReference>
<dbReference type="GO" id="GO:0019843">
    <property type="term" value="F:rRNA binding"/>
    <property type="evidence" value="ECO:0007669"/>
    <property type="project" value="UniProtKB-KW"/>
</dbReference>
<dbReference type="GO" id="GO:0009658">
    <property type="term" value="P:chloroplast organization"/>
    <property type="evidence" value="ECO:0000315"/>
    <property type="project" value="TAIR"/>
</dbReference>
<dbReference type="GO" id="GO:0042254">
    <property type="term" value="P:ribosome biogenesis"/>
    <property type="evidence" value="ECO:0007669"/>
    <property type="project" value="UniProtKB-KW"/>
</dbReference>
<dbReference type="CDD" id="cd01854">
    <property type="entry name" value="YjeQ_EngC"/>
    <property type="match status" value="1"/>
</dbReference>
<dbReference type="FunFam" id="2.40.50.140:FF:000659">
    <property type="match status" value="1"/>
</dbReference>
<dbReference type="FunFam" id="3.40.50.300:FF:003460">
    <property type="entry name" value="Putative ribosome biogenesis GTPase RsgA"/>
    <property type="match status" value="1"/>
</dbReference>
<dbReference type="Gene3D" id="2.40.50.140">
    <property type="entry name" value="Nucleic acid-binding proteins"/>
    <property type="match status" value="1"/>
</dbReference>
<dbReference type="Gene3D" id="3.40.50.300">
    <property type="entry name" value="P-loop containing nucleotide triphosphate hydrolases"/>
    <property type="match status" value="1"/>
</dbReference>
<dbReference type="Gene3D" id="1.10.40.50">
    <property type="entry name" value="Probable gtpase engc, domain 3"/>
    <property type="match status" value="1"/>
</dbReference>
<dbReference type="HAMAP" id="MF_01820">
    <property type="entry name" value="GTPase_RsgA"/>
    <property type="match status" value="1"/>
</dbReference>
<dbReference type="InterPro" id="IPR030378">
    <property type="entry name" value="G_CP_dom"/>
</dbReference>
<dbReference type="InterPro" id="IPR012340">
    <property type="entry name" value="NA-bd_OB-fold"/>
</dbReference>
<dbReference type="InterPro" id="IPR027417">
    <property type="entry name" value="P-loop_NTPase"/>
</dbReference>
<dbReference type="InterPro" id="IPR004881">
    <property type="entry name" value="Ribosome_biogen_GTPase_RsgA"/>
</dbReference>
<dbReference type="InterPro" id="IPR010914">
    <property type="entry name" value="RsgA_GTPase_dom"/>
</dbReference>
<dbReference type="NCBIfam" id="TIGR00157">
    <property type="entry name" value="ribosome small subunit-dependent GTPase A"/>
    <property type="match status" value="1"/>
</dbReference>
<dbReference type="PANTHER" id="PTHR32120">
    <property type="entry name" value="SMALL RIBOSOMAL SUBUNIT BIOGENESIS GTPASE RSGA"/>
    <property type="match status" value="1"/>
</dbReference>
<dbReference type="PANTHER" id="PTHR32120:SF11">
    <property type="entry name" value="SMALL RIBOSOMAL SUBUNIT BIOGENESIS GTPASE RSGA 1, MITOCHONDRIAL-RELATED"/>
    <property type="match status" value="1"/>
</dbReference>
<dbReference type="Pfam" id="PF03193">
    <property type="entry name" value="RsgA_GTPase"/>
    <property type="match status" value="1"/>
</dbReference>
<dbReference type="SUPFAM" id="SSF50249">
    <property type="entry name" value="Nucleic acid-binding proteins"/>
    <property type="match status" value="1"/>
</dbReference>
<dbReference type="SUPFAM" id="SSF52540">
    <property type="entry name" value="P-loop containing nucleoside triphosphate hydrolases"/>
    <property type="match status" value="1"/>
</dbReference>
<dbReference type="PROSITE" id="PS50936">
    <property type="entry name" value="ENGC_GTPASE"/>
    <property type="match status" value="1"/>
</dbReference>
<dbReference type="PROSITE" id="PS51721">
    <property type="entry name" value="G_CP"/>
    <property type="match status" value="1"/>
</dbReference>
<gene>
    <name evidence="2" type="primary">rsgA</name>
    <name evidence="6" type="synonym">EMB1688</name>
    <name evidence="8" type="ordered locus">At1g67440</name>
    <name evidence="9" type="ORF">T1F15.10</name>
</gene>
<organism>
    <name type="scientific">Arabidopsis thaliana</name>
    <name type="common">Mouse-ear cress</name>
    <dbReference type="NCBI Taxonomy" id="3702"/>
    <lineage>
        <taxon>Eukaryota</taxon>
        <taxon>Viridiplantae</taxon>
        <taxon>Streptophyta</taxon>
        <taxon>Embryophyta</taxon>
        <taxon>Tracheophyta</taxon>
        <taxon>Spermatophyta</taxon>
        <taxon>Magnoliopsida</taxon>
        <taxon>eudicotyledons</taxon>
        <taxon>Gunneridae</taxon>
        <taxon>Pentapetalae</taxon>
        <taxon>rosids</taxon>
        <taxon>malvids</taxon>
        <taxon>Brassicales</taxon>
        <taxon>Brassicaceae</taxon>
        <taxon>Camelineae</taxon>
        <taxon>Arabidopsis</taxon>
    </lineage>
</organism>
<name>RSGA1_ARATH</name>
<reference key="1">
    <citation type="journal article" date="2000" name="Nature">
        <title>Sequence and analysis of chromosome 1 of the plant Arabidopsis thaliana.</title>
        <authorList>
            <person name="Theologis A."/>
            <person name="Ecker J.R."/>
            <person name="Palm C.J."/>
            <person name="Federspiel N.A."/>
            <person name="Kaul S."/>
            <person name="White O."/>
            <person name="Alonso J."/>
            <person name="Altafi H."/>
            <person name="Araujo R."/>
            <person name="Bowman C.L."/>
            <person name="Brooks S.Y."/>
            <person name="Buehler E."/>
            <person name="Chan A."/>
            <person name="Chao Q."/>
            <person name="Chen H."/>
            <person name="Cheuk R.F."/>
            <person name="Chin C.W."/>
            <person name="Chung M.K."/>
            <person name="Conn L."/>
            <person name="Conway A.B."/>
            <person name="Conway A.R."/>
            <person name="Creasy T.H."/>
            <person name="Dewar K."/>
            <person name="Dunn P."/>
            <person name="Etgu P."/>
            <person name="Feldblyum T.V."/>
            <person name="Feng J.-D."/>
            <person name="Fong B."/>
            <person name="Fujii C.Y."/>
            <person name="Gill J.E."/>
            <person name="Goldsmith A.D."/>
            <person name="Haas B."/>
            <person name="Hansen N.F."/>
            <person name="Hughes B."/>
            <person name="Huizar L."/>
            <person name="Hunter J.L."/>
            <person name="Jenkins J."/>
            <person name="Johnson-Hopson C."/>
            <person name="Khan S."/>
            <person name="Khaykin E."/>
            <person name="Kim C.J."/>
            <person name="Koo H.L."/>
            <person name="Kremenetskaia I."/>
            <person name="Kurtz D.B."/>
            <person name="Kwan A."/>
            <person name="Lam B."/>
            <person name="Langin-Hooper S."/>
            <person name="Lee A."/>
            <person name="Lee J.M."/>
            <person name="Lenz C.A."/>
            <person name="Li J.H."/>
            <person name="Li Y.-P."/>
            <person name="Lin X."/>
            <person name="Liu S.X."/>
            <person name="Liu Z.A."/>
            <person name="Luros J.S."/>
            <person name="Maiti R."/>
            <person name="Marziali A."/>
            <person name="Militscher J."/>
            <person name="Miranda M."/>
            <person name="Nguyen M."/>
            <person name="Nierman W.C."/>
            <person name="Osborne B.I."/>
            <person name="Pai G."/>
            <person name="Peterson J."/>
            <person name="Pham P.K."/>
            <person name="Rizzo M."/>
            <person name="Rooney T."/>
            <person name="Rowley D."/>
            <person name="Sakano H."/>
            <person name="Salzberg S.L."/>
            <person name="Schwartz J.R."/>
            <person name="Shinn P."/>
            <person name="Southwick A.M."/>
            <person name="Sun H."/>
            <person name="Tallon L.J."/>
            <person name="Tambunga G."/>
            <person name="Toriumi M.J."/>
            <person name="Town C.D."/>
            <person name="Utterback T."/>
            <person name="Van Aken S."/>
            <person name="Vaysberg M."/>
            <person name="Vysotskaia V.S."/>
            <person name="Walker M."/>
            <person name="Wu D."/>
            <person name="Yu G."/>
            <person name="Fraser C.M."/>
            <person name="Venter J.C."/>
            <person name="Davis R.W."/>
        </authorList>
    </citation>
    <scope>NUCLEOTIDE SEQUENCE [LARGE SCALE GENOMIC DNA]</scope>
    <source>
        <strain>cv. Columbia</strain>
    </source>
</reference>
<reference key="2">
    <citation type="journal article" date="2017" name="Plant J.">
        <title>Araport11: a complete reannotation of the Arabidopsis thaliana reference genome.</title>
        <authorList>
            <person name="Cheng C.Y."/>
            <person name="Krishnakumar V."/>
            <person name="Chan A.P."/>
            <person name="Thibaud-Nissen F."/>
            <person name="Schobel S."/>
            <person name="Town C.D."/>
        </authorList>
    </citation>
    <scope>GENOME REANNOTATION</scope>
    <source>
        <strain>cv. Columbia</strain>
    </source>
</reference>
<reference key="3">
    <citation type="submission" date="2005-05" db="EMBL/GenBank/DDBJ databases">
        <title>Arabidopsis ORF clones.</title>
        <authorList>
            <person name="Cheuk R.F."/>
            <person name="Chen H."/>
            <person name="Kim C.J."/>
            <person name="Shinn P."/>
            <person name="Ecker J.R."/>
        </authorList>
    </citation>
    <scope>NUCLEOTIDE SEQUENCE [MRNA]</scope>
    <source>
        <strain>cv. Columbia</strain>
    </source>
</reference>
<reference key="4">
    <citation type="journal article" date="2004" name="Plant Physiol.">
        <title>Identification of genes required for embryo development in Arabidopsis.</title>
        <authorList>
            <person name="Tzafrir I."/>
            <person name="Pena-Muralla R."/>
            <person name="Dickerman A."/>
            <person name="Berg M."/>
            <person name="Rogers R."/>
            <person name="Hutchens S."/>
            <person name="Sweeney T.C."/>
            <person name="McElver J."/>
            <person name="Aux G."/>
            <person name="Patton D."/>
            <person name="Meinke D."/>
        </authorList>
    </citation>
    <scope>FUNCTION</scope>
    <scope>DISRUPTION PHENOTYPE</scope>
</reference>
<proteinExistence type="evidence at transcript level"/>
<evidence type="ECO:0000255" key="1"/>
<evidence type="ECO:0000255" key="2">
    <source>
        <dbReference type="HAMAP-Rule" id="MF_01820"/>
    </source>
</evidence>
<evidence type="ECO:0000255" key="3">
    <source>
        <dbReference type="PROSITE-ProRule" id="PRU01058"/>
    </source>
</evidence>
<evidence type="ECO:0000256" key="4">
    <source>
        <dbReference type="SAM" id="MobiDB-lite"/>
    </source>
</evidence>
<evidence type="ECO:0000269" key="5">
    <source>
    </source>
</evidence>
<evidence type="ECO:0000303" key="6">
    <source>
    </source>
</evidence>
<evidence type="ECO:0000305" key="7"/>
<evidence type="ECO:0000312" key="8">
    <source>
        <dbReference type="Araport" id="AT1G67440"/>
    </source>
</evidence>
<evidence type="ECO:0000312" key="9">
    <source>
        <dbReference type="EMBL" id="AAC18791.1"/>
    </source>
</evidence>
<protein>
    <recommendedName>
        <fullName evidence="2">Small ribosomal subunit biogenesis GTPase RsgA 1, mitochondrial</fullName>
        <ecNumber evidence="2">3.6.1.-</ecNumber>
    </recommendedName>
    <alternativeName>
        <fullName evidence="6">Protein EMBRYO DEFECTIVE 1688</fullName>
    </alternativeName>
</protein>